<evidence type="ECO:0000255" key="1">
    <source>
        <dbReference type="HAMAP-Rule" id="MF_01315"/>
    </source>
</evidence>
<evidence type="ECO:0000256" key="2">
    <source>
        <dbReference type="SAM" id="MobiDB-lite"/>
    </source>
</evidence>
<evidence type="ECO:0000305" key="3"/>
<proteinExistence type="inferred from homology"/>
<feature type="chain" id="PRO_0000230495" description="Small ribosomal subunit protein uS13">
    <location>
        <begin position="1"/>
        <end position="122"/>
    </location>
</feature>
<feature type="region of interest" description="Disordered" evidence="2">
    <location>
        <begin position="95"/>
        <end position="122"/>
    </location>
</feature>
<organism>
    <name type="scientific">Corynebacterium diphtheriae (strain ATCC 700971 / NCTC 13129 / Biotype gravis)</name>
    <dbReference type="NCBI Taxonomy" id="257309"/>
    <lineage>
        <taxon>Bacteria</taxon>
        <taxon>Bacillati</taxon>
        <taxon>Actinomycetota</taxon>
        <taxon>Actinomycetes</taxon>
        <taxon>Mycobacteriales</taxon>
        <taxon>Corynebacteriaceae</taxon>
        <taxon>Corynebacterium</taxon>
    </lineage>
</organism>
<protein>
    <recommendedName>
        <fullName evidence="1">Small ribosomal subunit protein uS13</fullName>
    </recommendedName>
    <alternativeName>
        <fullName evidence="3">30S ribosomal protein S13</fullName>
    </alternativeName>
</protein>
<comment type="function">
    <text evidence="1">Located at the top of the head of the 30S subunit, it contacts several helices of the 16S rRNA. In the 70S ribosome it contacts the 23S rRNA (bridge B1a) and protein L5 of the 50S subunit (bridge B1b), connecting the 2 subunits; these bridges are implicated in subunit movement. Contacts the tRNAs in the A and P-sites.</text>
</comment>
<comment type="subunit">
    <text evidence="1">Part of the 30S ribosomal subunit. Forms a loose heterodimer with protein S19. Forms two bridges to the 50S subunit in the 70S ribosome.</text>
</comment>
<comment type="similarity">
    <text evidence="1">Belongs to the universal ribosomal protein uS13 family.</text>
</comment>
<reference key="1">
    <citation type="journal article" date="2003" name="Nucleic Acids Res.">
        <title>The complete genome sequence and analysis of Corynebacterium diphtheriae NCTC13129.</title>
        <authorList>
            <person name="Cerdeno-Tarraga A.-M."/>
            <person name="Efstratiou A."/>
            <person name="Dover L.G."/>
            <person name="Holden M.T.G."/>
            <person name="Pallen M.J."/>
            <person name="Bentley S.D."/>
            <person name="Besra G.S."/>
            <person name="Churcher C.M."/>
            <person name="James K.D."/>
            <person name="De Zoysa A."/>
            <person name="Chillingworth T."/>
            <person name="Cronin A."/>
            <person name="Dowd L."/>
            <person name="Feltwell T."/>
            <person name="Hamlin N."/>
            <person name="Holroyd S."/>
            <person name="Jagels K."/>
            <person name="Moule S."/>
            <person name="Quail M.A."/>
            <person name="Rabbinowitsch E."/>
            <person name="Rutherford K.M."/>
            <person name="Thomson N.R."/>
            <person name="Unwin L."/>
            <person name="Whitehead S."/>
            <person name="Barrell B.G."/>
            <person name="Parkhill J."/>
        </authorList>
    </citation>
    <scope>NUCLEOTIDE SEQUENCE [LARGE SCALE GENOMIC DNA]</scope>
    <source>
        <strain>ATCC 700971 / NCTC 13129 / Biotype gravis</strain>
    </source>
</reference>
<name>RS13_CORDI</name>
<gene>
    <name evidence="1" type="primary">rpsM</name>
    <name type="ordered locus">DIP0546</name>
</gene>
<dbReference type="EMBL" id="BX248355">
    <property type="protein sequence ID" value="CAE49057.1"/>
    <property type="molecule type" value="Genomic_DNA"/>
</dbReference>
<dbReference type="RefSeq" id="WP_004566853.1">
    <property type="nucleotide sequence ID" value="NC_002935.2"/>
</dbReference>
<dbReference type="SMR" id="Q6NJ66"/>
<dbReference type="STRING" id="257309.DIP0546"/>
<dbReference type="GeneID" id="97331155"/>
<dbReference type="KEGG" id="cdi:DIP0546"/>
<dbReference type="HOGENOM" id="CLU_103849_1_2_11"/>
<dbReference type="Proteomes" id="UP000002198">
    <property type="component" value="Chromosome"/>
</dbReference>
<dbReference type="GO" id="GO:0005829">
    <property type="term" value="C:cytosol"/>
    <property type="evidence" value="ECO:0007669"/>
    <property type="project" value="TreeGrafter"/>
</dbReference>
<dbReference type="GO" id="GO:0015935">
    <property type="term" value="C:small ribosomal subunit"/>
    <property type="evidence" value="ECO:0007669"/>
    <property type="project" value="TreeGrafter"/>
</dbReference>
<dbReference type="GO" id="GO:0019843">
    <property type="term" value="F:rRNA binding"/>
    <property type="evidence" value="ECO:0007669"/>
    <property type="project" value="UniProtKB-UniRule"/>
</dbReference>
<dbReference type="GO" id="GO:0003735">
    <property type="term" value="F:structural constituent of ribosome"/>
    <property type="evidence" value="ECO:0007669"/>
    <property type="project" value="InterPro"/>
</dbReference>
<dbReference type="GO" id="GO:0000049">
    <property type="term" value="F:tRNA binding"/>
    <property type="evidence" value="ECO:0007669"/>
    <property type="project" value="UniProtKB-UniRule"/>
</dbReference>
<dbReference type="GO" id="GO:0006412">
    <property type="term" value="P:translation"/>
    <property type="evidence" value="ECO:0007669"/>
    <property type="project" value="UniProtKB-UniRule"/>
</dbReference>
<dbReference type="FunFam" id="1.10.8.50:FF:000001">
    <property type="entry name" value="30S ribosomal protein S13"/>
    <property type="match status" value="1"/>
</dbReference>
<dbReference type="FunFam" id="4.10.910.10:FF:000001">
    <property type="entry name" value="30S ribosomal protein S13"/>
    <property type="match status" value="1"/>
</dbReference>
<dbReference type="Gene3D" id="1.10.8.50">
    <property type="match status" value="1"/>
</dbReference>
<dbReference type="Gene3D" id="4.10.910.10">
    <property type="entry name" value="30s ribosomal protein s13, domain 2"/>
    <property type="match status" value="1"/>
</dbReference>
<dbReference type="HAMAP" id="MF_01315">
    <property type="entry name" value="Ribosomal_uS13"/>
    <property type="match status" value="1"/>
</dbReference>
<dbReference type="InterPro" id="IPR027437">
    <property type="entry name" value="Rbsml_uS13_C"/>
</dbReference>
<dbReference type="InterPro" id="IPR001892">
    <property type="entry name" value="Ribosomal_uS13"/>
</dbReference>
<dbReference type="InterPro" id="IPR010979">
    <property type="entry name" value="Ribosomal_uS13-like_H2TH"/>
</dbReference>
<dbReference type="InterPro" id="IPR019980">
    <property type="entry name" value="Ribosomal_uS13_bac-type"/>
</dbReference>
<dbReference type="InterPro" id="IPR018269">
    <property type="entry name" value="Ribosomal_uS13_CS"/>
</dbReference>
<dbReference type="NCBIfam" id="TIGR03631">
    <property type="entry name" value="uS13_bact"/>
    <property type="match status" value="1"/>
</dbReference>
<dbReference type="PANTHER" id="PTHR10871">
    <property type="entry name" value="30S RIBOSOMAL PROTEIN S13/40S RIBOSOMAL PROTEIN S18"/>
    <property type="match status" value="1"/>
</dbReference>
<dbReference type="PANTHER" id="PTHR10871:SF1">
    <property type="entry name" value="SMALL RIBOSOMAL SUBUNIT PROTEIN US13M"/>
    <property type="match status" value="1"/>
</dbReference>
<dbReference type="Pfam" id="PF00416">
    <property type="entry name" value="Ribosomal_S13"/>
    <property type="match status" value="1"/>
</dbReference>
<dbReference type="PIRSF" id="PIRSF002134">
    <property type="entry name" value="Ribosomal_S13"/>
    <property type="match status" value="1"/>
</dbReference>
<dbReference type="SUPFAM" id="SSF46946">
    <property type="entry name" value="S13-like H2TH domain"/>
    <property type="match status" value="1"/>
</dbReference>
<dbReference type="PROSITE" id="PS00646">
    <property type="entry name" value="RIBOSOMAL_S13_1"/>
    <property type="match status" value="1"/>
</dbReference>
<dbReference type="PROSITE" id="PS50159">
    <property type="entry name" value="RIBOSOMAL_S13_2"/>
    <property type="match status" value="1"/>
</dbReference>
<keyword id="KW-1185">Reference proteome</keyword>
<keyword id="KW-0687">Ribonucleoprotein</keyword>
<keyword id="KW-0689">Ribosomal protein</keyword>
<keyword id="KW-0694">RNA-binding</keyword>
<keyword id="KW-0699">rRNA-binding</keyword>
<keyword id="KW-0820">tRNA-binding</keyword>
<sequence>MARLAGVDLPRNKRMEVALTYIYGIGPARAAQLLEETGISPDLRTDNLTDEQVSALRDVIEATWKVEGDLRRQVQADIRRKIEIGCYQGLRHRRGLPVRGQRTKTNARTRKGPKKTIAGKKK</sequence>
<accession>Q6NJ66</accession>